<organism>
    <name type="scientific">Chaetomium thermophilum (strain DSM 1495 / CBS 144.50 / IMI 039719)</name>
    <name type="common">Thermochaetoides thermophila</name>
    <dbReference type="NCBI Taxonomy" id="759272"/>
    <lineage>
        <taxon>Eukaryota</taxon>
        <taxon>Fungi</taxon>
        <taxon>Dikarya</taxon>
        <taxon>Ascomycota</taxon>
        <taxon>Pezizomycotina</taxon>
        <taxon>Sordariomycetes</taxon>
        <taxon>Sordariomycetidae</taxon>
        <taxon>Sordariales</taxon>
        <taxon>Chaetomiaceae</taxon>
        <taxon>Thermochaetoides</taxon>
    </lineage>
</organism>
<feature type="chain" id="PRO_0000435287" description="Formate dehydrogenase">
    <location>
        <begin position="1"/>
        <end position="370"/>
    </location>
</feature>
<feature type="binding site" evidence="1">
    <location>
        <position position="94"/>
    </location>
    <ligand>
        <name>substrate</name>
    </ligand>
</feature>
<feature type="binding site" evidence="1">
    <location>
        <position position="120"/>
    </location>
    <ligand>
        <name>substrate</name>
    </ligand>
</feature>
<feature type="binding site" evidence="1">
    <location>
        <begin position="175"/>
        <end position="176"/>
    </location>
    <ligand>
        <name>NAD(+)</name>
        <dbReference type="ChEBI" id="CHEBI:57540"/>
    </ligand>
</feature>
<feature type="binding site" evidence="1">
    <location>
        <position position="196"/>
    </location>
    <ligand>
        <name>NAD(+)</name>
        <dbReference type="ChEBI" id="CHEBI:57540"/>
    </ligand>
</feature>
<feature type="binding site" evidence="1">
    <location>
        <begin position="231"/>
        <end position="235"/>
    </location>
    <ligand>
        <name>NAD(+)</name>
        <dbReference type="ChEBI" id="CHEBI:57540"/>
    </ligand>
</feature>
<feature type="binding site" evidence="1">
    <location>
        <position position="257"/>
    </location>
    <ligand>
        <name>NAD(+)</name>
        <dbReference type="ChEBI" id="CHEBI:57540"/>
    </ligand>
</feature>
<feature type="binding site" evidence="1">
    <location>
        <position position="283"/>
    </location>
    <ligand>
        <name>NAD(+)</name>
        <dbReference type="ChEBI" id="CHEBI:57540"/>
    </ligand>
</feature>
<feature type="binding site" evidence="1">
    <location>
        <begin position="312"/>
        <end position="315"/>
    </location>
    <ligand>
        <name>NAD(+)</name>
        <dbReference type="ChEBI" id="CHEBI:57540"/>
    </ligand>
</feature>
<feature type="site" description="Important for catalytic activity" evidence="1">
    <location>
        <position position="259"/>
    </location>
</feature>
<feature type="site" description="Important for catalytic activity" evidence="1">
    <location>
        <position position="312"/>
    </location>
</feature>
<gene>
    <name evidence="3" type="primary">FDH</name>
    <name type="ORF">CTHT_0067590</name>
</gene>
<proteinExistence type="evidence at protein level"/>
<keyword id="KW-0002">3D-structure</keyword>
<keyword id="KW-0963">Cytoplasm</keyword>
<keyword id="KW-0520">NAD</keyword>
<keyword id="KW-0560">Oxidoreductase</keyword>
<keyword id="KW-1185">Reference proteome</keyword>
<accession>G0SGU4</accession>
<dbReference type="EC" id="1.17.1.9" evidence="1 2"/>
<dbReference type="EMBL" id="GL988047">
    <property type="protein sequence ID" value="EGS17433.1"/>
    <property type="molecule type" value="Genomic_DNA"/>
</dbReference>
<dbReference type="RefSeq" id="XP_006697051.1">
    <property type="nucleotide sequence ID" value="XM_006696988.1"/>
</dbReference>
<dbReference type="PDB" id="6T8Y">
    <property type="method" value="X-ray"/>
    <property type="resolution" value="1.26 A"/>
    <property type="chains" value="AAA/BBB/CCC/DDD=1-370"/>
</dbReference>
<dbReference type="PDB" id="6T8Z">
    <property type="method" value="X-ray"/>
    <property type="resolution" value="1.21 A"/>
    <property type="chains" value="AAA/BBB/CCC/DDD=1-370"/>
</dbReference>
<dbReference type="PDB" id="6T92">
    <property type="method" value="X-ray"/>
    <property type="resolution" value="1.12 A"/>
    <property type="chains" value="AAA/BBB/CCC/DDD=1-370"/>
</dbReference>
<dbReference type="PDB" id="6T94">
    <property type="method" value="X-ray"/>
    <property type="resolution" value="1.15 A"/>
    <property type="chains" value="AAA/BBB/CCC/DDD=1-370"/>
</dbReference>
<dbReference type="PDBsum" id="6T8Y"/>
<dbReference type="PDBsum" id="6T8Z"/>
<dbReference type="PDBsum" id="6T92"/>
<dbReference type="PDBsum" id="6T94"/>
<dbReference type="SMR" id="G0SGU4"/>
<dbReference type="STRING" id="759272.G0SGU4"/>
<dbReference type="GeneID" id="18260797"/>
<dbReference type="KEGG" id="cthr:CTHT_0067590"/>
<dbReference type="eggNOG" id="KOG0069">
    <property type="taxonomic scope" value="Eukaryota"/>
</dbReference>
<dbReference type="HOGENOM" id="CLU_019796_0_0_1"/>
<dbReference type="OMA" id="HYTDRHR"/>
<dbReference type="OrthoDB" id="418179at2759"/>
<dbReference type="BRENDA" id="1.17.1.9">
    <property type="organism ID" value="1279"/>
</dbReference>
<dbReference type="Proteomes" id="UP000008066">
    <property type="component" value="Unassembled WGS sequence"/>
</dbReference>
<dbReference type="GO" id="GO:0005829">
    <property type="term" value="C:cytosol"/>
    <property type="evidence" value="ECO:0007669"/>
    <property type="project" value="TreeGrafter"/>
</dbReference>
<dbReference type="GO" id="GO:0008863">
    <property type="term" value="F:formate dehydrogenase (NAD+) activity"/>
    <property type="evidence" value="ECO:0007669"/>
    <property type="project" value="UniProtKB-UniRule"/>
</dbReference>
<dbReference type="GO" id="GO:0051287">
    <property type="term" value="F:NAD binding"/>
    <property type="evidence" value="ECO:0007669"/>
    <property type="project" value="InterPro"/>
</dbReference>
<dbReference type="GO" id="GO:0016616">
    <property type="term" value="F:oxidoreductase activity, acting on the CH-OH group of donors, NAD or NADP as acceptor"/>
    <property type="evidence" value="ECO:0007669"/>
    <property type="project" value="InterPro"/>
</dbReference>
<dbReference type="GO" id="GO:0042183">
    <property type="term" value="P:formate catabolic process"/>
    <property type="evidence" value="ECO:0007669"/>
    <property type="project" value="UniProtKB-UniRule"/>
</dbReference>
<dbReference type="CDD" id="cd05302">
    <property type="entry name" value="FDH"/>
    <property type="match status" value="1"/>
</dbReference>
<dbReference type="FunFam" id="3.40.50.720:FF:000057">
    <property type="entry name" value="Formate dehydrogenase"/>
    <property type="match status" value="1"/>
</dbReference>
<dbReference type="Gene3D" id="3.40.50.720">
    <property type="entry name" value="NAD(P)-binding Rossmann-like Domain"/>
    <property type="match status" value="2"/>
</dbReference>
<dbReference type="HAMAP" id="MF_03210">
    <property type="entry name" value="Formate_dehydrogenase"/>
    <property type="match status" value="1"/>
</dbReference>
<dbReference type="InterPro" id="IPR006139">
    <property type="entry name" value="D-isomer_2_OHA_DH_cat_dom"/>
</dbReference>
<dbReference type="InterPro" id="IPR029753">
    <property type="entry name" value="D-isomer_DH_CS"/>
</dbReference>
<dbReference type="InterPro" id="IPR029752">
    <property type="entry name" value="D-isomer_DH_CS1"/>
</dbReference>
<dbReference type="InterPro" id="IPR006140">
    <property type="entry name" value="D-isomer_DH_NAD-bd"/>
</dbReference>
<dbReference type="InterPro" id="IPR033689">
    <property type="entry name" value="FDH_NAD-dep"/>
</dbReference>
<dbReference type="InterPro" id="IPR036291">
    <property type="entry name" value="NAD(P)-bd_dom_sf"/>
</dbReference>
<dbReference type="NCBIfam" id="NF005750">
    <property type="entry name" value="PRK07574.1"/>
    <property type="match status" value="1"/>
</dbReference>
<dbReference type="PANTHER" id="PTHR42938">
    <property type="entry name" value="FORMATE DEHYDROGENASE 1"/>
    <property type="match status" value="1"/>
</dbReference>
<dbReference type="PANTHER" id="PTHR42938:SF9">
    <property type="entry name" value="FORMATE DEHYDROGENASE 1"/>
    <property type="match status" value="1"/>
</dbReference>
<dbReference type="Pfam" id="PF00389">
    <property type="entry name" value="2-Hacid_dh"/>
    <property type="match status" value="1"/>
</dbReference>
<dbReference type="Pfam" id="PF02826">
    <property type="entry name" value="2-Hacid_dh_C"/>
    <property type="match status" value="1"/>
</dbReference>
<dbReference type="SUPFAM" id="SSF52283">
    <property type="entry name" value="Formate/glycerate dehydrogenase catalytic domain-like"/>
    <property type="match status" value="1"/>
</dbReference>
<dbReference type="SUPFAM" id="SSF51735">
    <property type="entry name" value="NAD(P)-binding Rossmann-fold domains"/>
    <property type="match status" value="1"/>
</dbReference>
<dbReference type="PROSITE" id="PS00065">
    <property type="entry name" value="D_2_HYDROXYACID_DH_1"/>
    <property type="match status" value="1"/>
</dbReference>
<dbReference type="PROSITE" id="PS00670">
    <property type="entry name" value="D_2_HYDROXYACID_DH_2"/>
    <property type="match status" value="1"/>
</dbReference>
<dbReference type="PROSITE" id="PS00671">
    <property type="entry name" value="D_2_HYDROXYACID_DH_3"/>
    <property type="match status" value="1"/>
</dbReference>
<name>FDH_CHATD</name>
<evidence type="ECO:0000255" key="1">
    <source>
        <dbReference type="HAMAP-Rule" id="MF_03210"/>
    </source>
</evidence>
<evidence type="ECO:0000269" key="2">
    <source ref="2"/>
</evidence>
<evidence type="ECO:0000303" key="3">
    <source ref="2"/>
</evidence>
<evidence type="ECO:0000305" key="4"/>
<protein>
    <recommendedName>
        <fullName evidence="1 4">Formate dehydrogenase</fullName>
        <shortName evidence="1 3">FDH</shortName>
        <ecNumber evidence="1 2">1.17.1.9</ecNumber>
    </recommendedName>
    <alternativeName>
        <fullName evidence="1 3">NAD-dependent formate dehydrogenase</fullName>
    </alternativeName>
</protein>
<sequence length="370" mass="40845">MVKVLAVLYDGGEHAKQVPGLLGTTENELGLRKWLEDQGHTLVTTSDKDREGSTFDRELEDAEIIITTPFHPGYLTAERLARAKKLKLAVTAGIGSDHVDLDAANKTNGGITVAEVTGSNVVSVAEHVVMTILVLVRNFVPAHEQIEAGRWDVAEVAKDEYDLEGKVVGTVGVGRIGERVLRRLKGFDCKELLYYDYQPLSPEKEKEIGCRRVENLEEMLAQCDVVTINCPLHESTRGLFNKDLISKMKRGSWLVNTARGAIVVKEDVAEALRTGHLRGYGGDVWFPQPAPADHVLRTAKNPFGGGNAMVPHMSGTSLDAQKRYAEGVKRILDSYLSGRFDYRPEDLIVHQGKYATRAYGQREDVKIPGQ</sequence>
<reference key="1">
    <citation type="journal article" date="2011" name="Cell">
        <title>Insight into structure and assembly of the nuclear pore complex by utilizing the genome of a eukaryotic thermophile.</title>
        <authorList>
            <person name="Amlacher S."/>
            <person name="Sarges P."/>
            <person name="Flemming D."/>
            <person name="van Noort V."/>
            <person name="Kunze R."/>
            <person name="Devos D.P."/>
            <person name="Arumugam M."/>
            <person name="Bork P."/>
            <person name="Hurt E."/>
        </authorList>
    </citation>
    <scope>NUCLEOTIDE SEQUENCE [LARGE SCALE GENOMIC DNA]</scope>
    <source>
        <strain>DSM 1495 / CBS 144.50 / IMI 039719</strain>
    </source>
</reference>
<reference key="2">
    <citation type="journal article" date="2015" name="J. Mol. Catal., B Enzym.">
        <title>Characterization of a new acidic NAD(+)-dependent formate dehydrogenase from thermophilic fungus Chaetomium thermophilum.</title>
        <authorList>
            <person name="Ozgun G."/>
            <person name="Karaguler N.G."/>
            <person name="Turunen O."/>
            <person name="Turner N.J."/>
            <person name="Binay B."/>
        </authorList>
    </citation>
    <scope>FUNCTION</scope>
    <scope>CATALYTIC ACTIVITY</scope>
    <scope>BIOPHYSICOCHEMICAL PROPERTIES</scope>
</reference>
<comment type="function">
    <text evidence="1 2">Catalyzes the NAD(+)-dependent oxidation of formate to carbon dioxide. Formate oxidation is the final step in the methanol oxidation pathway in methylotrophic microorganisms. Has a role in the detoxification of exogenous formate in non-methylotrophic organisms.</text>
</comment>
<comment type="catalytic activity">
    <reaction evidence="1 2">
        <text>formate + NAD(+) = CO2 + NADH</text>
        <dbReference type="Rhea" id="RHEA:15985"/>
        <dbReference type="ChEBI" id="CHEBI:15740"/>
        <dbReference type="ChEBI" id="CHEBI:16526"/>
        <dbReference type="ChEBI" id="CHEBI:57540"/>
        <dbReference type="ChEBI" id="CHEBI:57945"/>
        <dbReference type="EC" id="1.17.1.9"/>
    </reaction>
</comment>
<comment type="biophysicochemical properties">
    <kinetics>
        <KM evidence="2">5.2 mM for formate (at pH 5.0 and 25 degrees Celsius)</KM>
        <KM evidence="2">1.8 mM for NAD (at pH 5.0 and 25 degrees Celsius)</KM>
        <text evidence="2">kcat is 0.8 sec(-1) with formate as substrate.</text>
    </kinetics>
    <phDependence>
        <text evidence="2">Optimum pH is 5.</text>
    </phDependence>
    <temperatureDependence>
        <text evidence="2">Thermostable up to 55 degrees Celsius.</text>
    </temperatureDependence>
</comment>
<comment type="subunit">
    <text evidence="1">Homodimer.</text>
</comment>
<comment type="subcellular location">
    <subcellularLocation>
        <location evidence="1">Cytoplasm</location>
    </subcellularLocation>
</comment>
<comment type="similarity">
    <text evidence="1">Belongs to the D-isomer specific 2-hydroxyacid dehydrogenase family. FDH subfamily.</text>
</comment>